<feature type="chain" id="PRO_1000140835" description="Small ribosomal subunit protein uS5">
    <location>
        <begin position="1"/>
        <end position="166"/>
    </location>
</feature>
<feature type="domain" description="S5 DRBM" evidence="1">
    <location>
        <begin position="11"/>
        <end position="74"/>
    </location>
</feature>
<protein>
    <recommendedName>
        <fullName evidence="1">Small ribosomal subunit protein uS5</fullName>
    </recommendedName>
    <alternativeName>
        <fullName evidence="2">30S ribosomal protein S5</fullName>
    </alternativeName>
</protein>
<reference key="1">
    <citation type="journal article" date="2008" name="Genome Biol.">
        <title>Encapsulated in silica: genome, proteome and physiology of the thermophilic bacterium Anoxybacillus flavithermus WK1.</title>
        <authorList>
            <person name="Saw J.H."/>
            <person name="Mountain B.W."/>
            <person name="Feng L."/>
            <person name="Omelchenko M.V."/>
            <person name="Hou S."/>
            <person name="Saito J.A."/>
            <person name="Stott M.B."/>
            <person name="Li D."/>
            <person name="Zhao G."/>
            <person name="Wu J."/>
            <person name="Galperin M.Y."/>
            <person name="Koonin E.V."/>
            <person name="Makarova K.S."/>
            <person name="Wolf Y.I."/>
            <person name="Rigden D.J."/>
            <person name="Dunfield P.F."/>
            <person name="Wang L."/>
            <person name="Alam M."/>
        </authorList>
    </citation>
    <scope>NUCLEOTIDE SEQUENCE [LARGE SCALE GENOMIC DNA]</scope>
    <source>
        <strain>DSM 21510 / WK1</strain>
    </source>
</reference>
<gene>
    <name evidence="1" type="primary">rpsE</name>
    <name type="ordered locus">Aflv_0122</name>
</gene>
<accession>B7GJ84</accession>
<comment type="function">
    <text evidence="1">With S4 and S12 plays an important role in translational accuracy.</text>
</comment>
<comment type="function">
    <text evidence="1">Located at the back of the 30S subunit body where it stabilizes the conformation of the head with respect to the body.</text>
</comment>
<comment type="subunit">
    <text evidence="1">Part of the 30S ribosomal subunit. Contacts proteins S4 and S8.</text>
</comment>
<comment type="domain">
    <text>The N-terminal domain interacts with the head of the 30S subunit; the C-terminal domain interacts with the body and contacts protein S4. The interaction surface between S4 and S5 is involved in control of translational fidelity.</text>
</comment>
<comment type="similarity">
    <text evidence="1">Belongs to the universal ribosomal protein uS5 family.</text>
</comment>
<organism>
    <name type="scientific">Anoxybacillus flavithermus (strain DSM 21510 / WK1)</name>
    <dbReference type="NCBI Taxonomy" id="491915"/>
    <lineage>
        <taxon>Bacteria</taxon>
        <taxon>Bacillati</taxon>
        <taxon>Bacillota</taxon>
        <taxon>Bacilli</taxon>
        <taxon>Bacillales</taxon>
        <taxon>Anoxybacillaceae</taxon>
        <taxon>Anoxybacillus</taxon>
    </lineage>
</organism>
<keyword id="KW-0687">Ribonucleoprotein</keyword>
<keyword id="KW-0689">Ribosomal protein</keyword>
<keyword id="KW-0694">RNA-binding</keyword>
<keyword id="KW-0699">rRNA-binding</keyword>
<dbReference type="EMBL" id="CP000922">
    <property type="protein sequence ID" value="ACJ32506.1"/>
    <property type="molecule type" value="Genomic_DNA"/>
</dbReference>
<dbReference type="RefSeq" id="WP_004888691.1">
    <property type="nucleotide sequence ID" value="NC_011567.1"/>
</dbReference>
<dbReference type="SMR" id="B7GJ84"/>
<dbReference type="STRING" id="491915.Aflv_0122"/>
<dbReference type="GeneID" id="7036321"/>
<dbReference type="KEGG" id="afl:Aflv_0122"/>
<dbReference type="eggNOG" id="COG0098">
    <property type="taxonomic scope" value="Bacteria"/>
</dbReference>
<dbReference type="HOGENOM" id="CLU_065898_2_2_9"/>
<dbReference type="Proteomes" id="UP000000742">
    <property type="component" value="Chromosome"/>
</dbReference>
<dbReference type="GO" id="GO:0015935">
    <property type="term" value="C:small ribosomal subunit"/>
    <property type="evidence" value="ECO:0007669"/>
    <property type="project" value="InterPro"/>
</dbReference>
<dbReference type="GO" id="GO:0019843">
    <property type="term" value="F:rRNA binding"/>
    <property type="evidence" value="ECO:0007669"/>
    <property type="project" value="UniProtKB-UniRule"/>
</dbReference>
<dbReference type="GO" id="GO:0003735">
    <property type="term" value="F:structural constituent of ribosome"/>
    <property type="evidence" value="ECO:0007669"/>
    <property type="project" value="InterPro"/>
</dbReference>
<dbReference type="GO" id="GO:0006412">
    <property type="term" value="P:translation"/>
    <property type="evidence" value="ECO:0007669"/>
    <property type="project" value="UniProtKB-UniRule"/>
</dbReference>
<dbReference type="FunFam" id="3.30.160.20:FF:000001">
    <property type="entry name" value="30S ribosomal protein S5"/>
    <property type="match status" value="1"/>
</dbReference>
<dbReference type="FunFam" id="3.30.230.10:FF:000002">
    <property type="entry name" value="30S ribosomal protein S5"/>
    <property type="match status" value="1"/>
</dbReference>
<dbReference type="Gene3D" id="3.30.160.20">
    <property type="match status" value="1"/>
</dbReference>
<dbReference type="Gene3D" id="3.30.230.10">
    <property type="match status" value="1"/>
</dbReference>
<dbReference type="HAMAP" id="MF_01307_B">
    <property type="entry name" value="Ribosomal_uS5_B"/>
    <property type="match status" value="1"/>
</dbReference>
<dbReference type="InterPro" id="IPR020568">
    <property type="entry name" value="Ribosomal_Su5_D2-typ_SF"/>
</dbReference>
<dbReference type="InterPro" id="IPR000851">
    <property type="entry name" value="Ribosomal_uS5"/>
</dbReference>
<dbReference type="InterPro" id="IPR005712">
    <property type="entry name" value="Ribosomal_uS5_bac-type"/>
</dbReference>
<dbReference type="InterPro" id="IPR005324">
    <property type="entry name" value="Ribosomal_uS5_C"/>
</dbReference>
<dbReference type="InterPro" id="IPR013810">
    <property type="entry name" value="Ribosomal_uS5_N"/>
</dbReference>
<dbReference type="InterPro" id="IPR018192">
    <property type="entry name" value="Ribosomal_uS5_N_CS"/>
</dbReference>
<dbReference type="InterPro" id="IPR014721">
    <property type="entry name" value="Ribsml_uS5_D2-typ_fold_subgr"/>
</dbReference>
<dbReference type="NCBIfam" id="TIGR01021">
    <property type="entry name" value="rpsE_bact"/>
    <property type="match status" value="1"/>
</dbReference>
<dbReference type="PANTHER" id="PTHR48277">
    <property type="entry name" value="MITOCHONDRIAL RIBOSOMAL PROTEIN S5"/>
    <property type="match status" value="1"/>
</dbReference>
<dbReference type="PANTHER" id="PTHR48277:SF1">
    <property type="entry name" value="MITOCHONDRIAL RIBOSOMAL PROTEIN S5"/>
    <property type="match status" value="1"/>
</dbReference>
<dbReference type="Pfam" id="PF00333">
    <property type="entry name" value="Ribosomal_S5"/>
    <property type="match status" value="1"/>
</dbReference>
<dbReference type="Pfam" id="PF03719">
    <property type="entry name" value="Ribosomal_S5_C"/>
    <property type="match status" value="1"/>
</dbReference>
<dbReference type="SUPFAM" id="SSF54768">
    <property type="entry name" value="dsRNA-binding domain-like"/>
    <property type="match status" value="1"/>
</dbReference>
<dbReference type="SUPFAM" id="SSF54211">
    <property type="entry name" value="Ribosomal protein S5 domain 2-like"/>
    <property type="match status" value="1"/>
</dbReference>
<dbReference type="PROSITE" id="PS00585">
    <property type="entry name" value="RIBOSOMAL_S5"/>
    <property type="match status" value="1"/>
</dbReference>
<dbReference type="PROSITE" id="PS50881">
    <property type="entry name" value="S5_DSRBD"/>
    <property type="match status" value="1"/>
</dbReference>
<sequence>MRRIDPNKLELEERVVAVNRVAKVVKGGRRFRFAALVVVGDKNGHVGFGTGKAQEVPDAIRKAIEDAKKNLITVPIVGTTIPHEVIGHFGAGEIILKPASEGTGVIAGGPARAVLELAGISDILSKSIGSNTPINMVRATIDGLKQLKRAEEVAKLRGKTVEELLG</sequence>
<evidence type="ECO:0000255" key="1">
    <source>
        <dbReference type="HAMAP-Rule" id="MF_01307"/>
    </source>
</evidence>
<evidence type="ECO:0000305" key="2"/>
<name>RS5_ANOFW</name>
<proteinExistence type="inferred from homology"/>